<reference key="1">
    <citation type="journal article" date="2007" name="PLoS Genet.">
        <title>Patterns and implications of gene gain and loss in the evolution of Prochlorococcus.</title>
        <authorList>
            <person name="Kettler G.C."/>
            <person name="Martiny A.C."/>
            <person name="Huang K."/>
            <person name="Zucker J."/>
            <person name="Coleman M.L."/>
            <person name="Rodrigue S."/>
            <person name="Chen F."/>
            <person name="Lapidus A."/>
            <person name="Ferriera S."/>
            <person name="Johnson J."/>
            <person name="Steglich C."/>
            <person name="Church G.M."/>
            <person name="Richardson P."/>
            <person name="Chisholm S.W."/>
        </authorList>
    </citation>
    <scope>NUCLEOTIDE SEQUENCE [LARGE SCALE GENOMIC DNA]</scope>
    <source>
        <strain>NATL1A</strain>
    </source>
</reference>
<accession>A2C556</accession>
<organism>
    <name type="scientific">Prochlorococcus marinus (strain NATL1A)</name>
    <dbReference type="NCBI Taxonomy" id="167555"/>
    <lineage>
        <taxon>Bacteria</taxon>
        <taxon>Bacillati</taxon>
        <taxon>Cyanobacteriota</taxon>
        <taxon>Cyanophyceae</taxon>
        <taxon>Synechococcales</taxon>
        <taxon>Prochlorococcaceae</taxon>
        <taxon>Prochlorococcus</taxon>
    </lineage>
</organism>
<sequence length="80" mass="8641">MSQEAILEKVRSIVAEQLSVEAGEVKPDSNFQNDLGADSLDTVELVMALEEAFDIEIPDEAAEGIATVGDAVKYIEEKQS</sequence>
<gene>
    <name evidence="1" type="primary">acpP</name>
    <name type="ordered locus">NATL1_20601</name>
</gene>
<dbReference type="EMBL" id="CP000553">
    <property type="protein sequence ID" value="ABM76616.1"/>
    <property type="molecule type" value="Genomic_DNA"/>
</dbReference>
<dbReference type="RefSeq" id="WP_011295529.1">
    <property type="nucleotide sequence ID" value="NC_008819.1"/>
</dbReference>
<dbReference type="SMR" id="A2C556"/>
<dbReference type="KEGG" id="pme:NATL1_20601"/>
<dbReference type="eggNOG" id="COG0236">
    <property type="taxonomic scope" value="Bacteria"/>
</dbReference>
<dbReference type="HOGENOM" id="CLU_108696_5_1_3"/>
<dbReference type="UniPathway" id="UPA00094"/>
<dbReference type="Proteomes" id="UP000002592">
    <property type="component" value="Chromosome"/>
</dbReference>
<dbReference type="GO" id="GO:0005829">
    <property type="term" value="C:cytosol"/>
    <property type="evidence" value="ECO:0007669"/>
    <property type="project" value="TreeGrafter"/>
</dbReference>
<dbReference type="GO" id="GO:0016020">
    <property type="term" value="C:membrane"/>
    <property type="evidence" value="ECO:0007669"/>
    <property type="project" value="GOC"/>
</dbReference>
<dbReference type="GO" id="GO:0000035">
    <property type="term" value="F:acyl binding"/>
    <property type="evidence" value="ECO:0007669"/>
    <property type="project" value="TreeGrafter"/>
</dbReference>
<dbReference type="GO" id="GO:0000036">
    <property type="term" value="F:acyl carrier activity"/>
    <property type="evidence" value="ECO:0007669"/>
    <property type="project" value="UniProtKB-UniRule"/>
</dbReference>
<dbReference type="GO" id="GO:0031177">
    <property type="term" value="F:phosphopantetheine binding"/>
    <property type="evidence" value="ECO:0007669"/>
    <property type="project" value="InterPro"/>
</dbReference>
<dbReference type="GO" id="GO:0009245">
    <property type="term" value="P:lipid A biosynthetic process"/>
    <property type="evidence" value="ECO:0007669"/>
    <property type="project" value="TreeGrafter"/>
</dbReference>
<dbReference type="FunFam" id="1.10.1200.10:FF:000001">
    <property type="entry name" value="Acyl carrier protein"/>
    <property type="match status" value="1"/>
</dbReference>
<dbReference type="Gene3D" id="1.10.1200.10">
    <property type="entry name" value="ACP-like"/>
    <property type="match status" value="1"/>
</dbReference>
<dbReference type="HAMAP" id="MF_01217">
    <property type="entry name" value="Acyl_carrier"/>
    <property type="match status" value="1"/>
</dbReference>
<dbReference type="InterPro" id="IPR003231">
    <property type="entry name" value="ACP"/>
</dbReference>
<dbReference type="InterPro" id="IPR036736">
    <property type="entry name" value="ACP-like_sf"/>
</dbReference>
<dbReference type="InterPro" id="IPR020806">
    <property type="entry name" value="PKS_PP-bd"/>
</dbReference>
<dbReference type="InterPro" id="IPR009081">
    <property type="entry name" value="PP-bd_ACP"/>
</dbReference>
<dbReference type="InterPro" id="IPR006162">
    <property type="entry name" value="Ppantetheine_attach_site"/>
</dbReference>
<dbReference type="NCBIfam" id="TIGR00517">
    <property type="entry name" value="acyl_carrier"/>
    <property type="match status" value="1"/>
</dbReference>
<dbReference type="NCBIfam" id="NF002148">
    <property type="entry name" value="PRK00982.1-2"/>
    <property type="match status" value="1"/>
</dbReference>
<dbReference type="NCBIfam" id="NF002149">
    <property type="entry name" value="PRK00982.1-3"/>
    <property type="match status" value="1"/>
</dbReference>
<dbReference type="NCBIfam" id="NF002150">
    <property type="entry name" value="PRK00982.1-4"/>
    <property type="match status" value="1"/>
</dbReference>
<dbReference type="NCBIfam" id="NF002151">
    <property type="entry name" value="PRK00982.1-5"/>
    <property type="match status" value="1"/>
</dbReference>
<dbReference type="NCBIfam" id="NF009104">
    <property type="entry name" value="PRK12449.1"/>
    <property type="match status" value="1"/>
</dbReference>
<dbReference type="PANTHER" id="PTHR20863">
    <property type="entry name" value="ACYL CARRIER PROTEIN"/>
    <property type="match status" value="1"/>
</dbReference>
<dbReference type="PANTHER" id="PTHR20863:SF76">
    <property type="entry name" value="CARRIER DOMAIN-CONTAINING PROTEIN"/>
    <property type="match status" value="1"/>
</dbReference>
<dbReference type="Pfam" id="PF00550">
    <property type="entry name" value="PP-binding"/>
    <property type="match status" value="1"/>
</dbReference>
<dbReference type="SMART" id="SM00823">
    <property type="entry name" value="PKS_PP"/>
    <property type="match status" value="1"/>
</dbReference>
<dbReference type="SUPFAM" id="SSF47336">
    <property type="entry name" value="ACP-like"/>
    <property type="match status" value="1"/>
</dbReference>
<dbReference type="PROSITE" id="PS50075">
    <property type="entry name" value="CARRIER"/>
    <property type="match status" value="1"/>
</dbReference>
<dbReference type="PROSITE" id="PS00012">
    <property type="entry name" value="PHOSPHOPANTETHEINE"/>
    <property type="match status" value="1"/>
</dbReference>
<keyword id="KW-0963">Cytoplasm</keyword>
<keyword id="KW-0275">Fatty acid biosynthesis</keyword>
<keyword id="KW-0276">Fatty acid metabolism</keyword>
<keyword id="KW-0444">Lipid biosynthesis</keyword>
<keyword id="KW-0443">Lipid metabolism</keyword>
<keyword id="KW-0596">Phosphopantetheine</keyword>
<keyword id="KW-0597">Phosphoprotein</keyword>
<evidence type="ECO:0000255" key="1">
    <source>
        <dbReference type="HAMAP-Rule" id="MF_01217"/>
    </source>
</evidence>
<evidence type="ECO:0000255" key="2">
    <source>
        <dbReference type="PROSITE-ProRule" id="PRU00258"/>
    </source>
</evidence>
<protein>
    <recommendedName>
        <fullName evidence="1">Acyl carrier protein</fullName>
        <shortName evidence="1">ACP</shortName>
    </recommendedName>
</protein>
<comment type="function">
    <text evidence="1">Carrier of the growing fatty acid chain in fatty acid biosynthesis.</text>
</comment>
<comment type="pathway">
    <text evidence="1">Lipid metabolism; fatty acid biosynthesis.</text>
</comment>
<comment type="subcellular location">
    <subcellularLocation>
        <location evidence="1">Cytoplasm</location>
    </subcellularLocation>
</comment>
<comment type="PTM">
    <text evidence="1">4'-phosphopantetheine is transferred from CoA to a specific serine of apo-ACP by AcpS. This modification is essential for activity because fatty acids are bound in thioester linkage to the sulfhydryl of the prosthetic group.</text>
</comment>
<comment type="similarity">
    <text evidence="1">Belongs to the acyl carrier protein (ACP) family.</text>
</comment>
<name>ACP_PROM1</name>
<feature type="chain" id="PRO_1000066652" description="Acyl carrier protein">
    <location>
        <begin position="1"/>
        <end position="80"/>
    </location>
</feature>
<feature type="domain" description="Carrier" evidence="2">
    <location>
        <begin position="4"/>
        <end position="79"/>
    </location>
</feature>
<feature type="modified residue" description="O-(pantetheine 4'-phosphoryl)serine" evidence="2">
    <location>
        <position position="39"/>
    </location>
</feature>
<proteinExistence type="inferred from homology"/>